<keyword id="KW-0002">3D-structure</keyword>
<keyword id="KW-0028">Amino-acid biosynthesis</keyword>
<keyword id="KW-0032">Aminotransferase</keyword>
<keyword id="KW-0963">Cytoplasm</keyword>
<keyword id="KW-0903">Direct protein sequencing</keyword>
<keyword id="KW-0663">Pyridoxal phosphate</keyword>
<keyword id="KW-1185">Reference proteome</keyword>
<keyword id="KW-0808">Transferase</keyword>
<name>AATC_PIG</name>
<reference key="1">
    <citation type="journal article" date="1989" name="Biochemistry">
        <title>cDNA cloning and expression of pig cytosolic aspartate aminotransferase in Escherichia coli: amino-terminal heterogeneity of expressed products and lack of its correlation with enzyme function.</title>
        <authorList>
            <person name="Nagashima F."/>
            <person name="Tanase S."/>
            <person name="Fukumoto Y."/>
            <person name="Joh T."/>
            <person name="Nomiyama H."/>
            <person name="Tsuzuki T."/>
            <person name="Shimada K."/>
            <person name="Kuramitsu S."/>
            <person name="Kagamiyama H."/>
            <person name="Morino Y."/>
        </authorList>
    </citation>
    <scope>NUCLEOTIDE SEQUENCE [MRNA]</scope>
</reference>
<reference key="2">
    <citation type="journal article" date="1973" name="FEBS Lett.">
        <title>The complete amino acid sequence of cytoplasmic aspartate aminotransferase from pig heart.</title>
        <authorList>
            <person name="Ovchinnikov Y.A."/>
            <person name="Egorov T.A."/>
            <person name="Aldanova N.A."/>
            <person name="Feigina M.Y."/>
            <person name="Lipkin V.M."/>
            <person name="Abdulaev N.G."/>
            <person name="Grishin E.V."/>
            <person name="Kiselev A.P."/>
            <person name="Modyanov N.N."/>
            <person name="Braunstein A.E."/>
            <person name="Polyanovsky O.L."/>
            <person name="Nosikov V.V."/>
        </authorList>
    </citation>
    <scope>PROTEIN SEQUENCE OF 2-413</scope>
    <source>
        <tissue>Heart muscle</tissue>
    </source>
</reference>
<reference key="3">
    <citation type="journal article" date="1974" name="Izv. Akad. Nauk SSSR, Ser. Khim.">
        <title>The complete primary structure of cytoplasmic aspartate amino-transferase from pig heart muscle.</title>
        <authorList>
            <person name="Ovchinnikov Y.A."/>
            <person name="Egorov T.A."/>
            <person name="Aldanova N.A."/>
            <person name="Feigina M.Y."/>
            <person name="Lipkin V.M."/>
            <person name="Abdulaev N.G."/>
            <person name="Grishin E.V."/>
            <person name="Kiselev A.P."/>
            <person name="Modyanov N.N."/>
            <person name="Braunstein A.E."/>
            <person name="Polyanovsky O.L."/>
            <person name="Nosikov V.V."/>
        </authorList>
    </citation>
    <scope>PROTEIN SEQUENCE OF 2-413</scope>
</reference>
<reference key="4">
    <citation type="journal article" date="1975" name="Biochem. J.">
        <title>The primary structure of aspartate aminotransferase from pig heart muscle. Digestion with a proteinase having specificity for lysine residues.</title>
        <authorList>
            <person name="Doonan S."/>
            <person name="Doonan H.J."/>
            <person name="Hanford R."/>
            <person name="Vernon C.A."/>
            <person name="Walker J.M."/>
            <person name="Airoldi L.P."/>
            <person name="Da S."/>
            <person name="Bossa F."/>
            <person name="Barra D."/>
            <person name="Carloni M."/>
            <person name="Fasella P."/>
            <person name="Riva F."/>
        </authorList>
    </citation>
    <scope>PROTEIN SEQUENCE OF 2-413</scope>
</reference>
<reference key="5">
    <citation type="journal article" date="1972" name="FEBS Lett.">
        <title>The position of an essential tyrosine residue in the polypeptide chain of aspartate transaminase.</title>
        <authorList>
            <person name="Polyanovsky O.L."/>
            <person name="Demidkina T.V."/>
            <person name="Egorov C.A."/>
        </authorList>
    </citation>
    <scope>CATALYTIC ACTIVITY</scope>
</reference>
<reference key="6">
    <citation type="journal article" date="1969" name="Biochemistry">
        <title>Primary structure of pyridoxal phosphate binding site in the mitochondrial and extramitochondrial aspartate aminotransferases from pig heart muscle. Chymotryptic peptides.</title>
        <authorList>
            <person name="Morino Y."/>
            <person name="Watanabe T."/>
        </authorList>
    </citation>
    <scope>COFACTOR</scope>
</reference>
<reference key="7">
    <citation type="journal article" date="1997" name="J. Biol. Chem.">
        <title>Refinement and comparisons of the crystal structures of pig cytosolic aspartate aminotransferase and its complex with 2-methylaspartate.</title>
        <authorList>
            <person name="Rhee S."/>
            <person name="Silva M.M."/>
            <person name="Hyde C.C."/>
            <person name="Rogers P.H."/>
            <person name="Metzler C.M."/>
            <person name="Metzler D.E."/>
            <person name="Arnone A."/>
        </authorList>
    </citation>
    <scope>X-RAY CRYSTALLOGRAPHY (1.74 ANGSTROMS) IN COMPLEX WITH PYRIDOXAL PHOSPHATE AND 2-METHYLASPARTATE</scope>
    <scope>COFACTOR</scope>
    <scope>PYRIDOXAL PHOSPHATE AT LYS-259</scope>
    <scope>SUBUNIT</scope>
</reference>
<organism>
    <name type="scientific">Sus scrofa</name>
    <name type="common">Pig</name>
    <dbReference type="NCBI Taxonomy" id="9823"/>
    <lineage>
        <taxon>Eukaryota</taxon>
        <taxon>Metazoa</taxon>
        <taxon>Chordata</taxon>
        <taxon>Craniata</taxon>
        <taxon>Vertebrata</taxon>
        <taxon>Euteleostomi</taxon>
        <taxon>Mammalia</taxon>
        <taxon>Eutheria</taxon>
        <taxon>Laurasiatheria</taxon>
        <taxon>Artiodactyla</taxon>
        <taxon>Suina</taxon>
        <taxon>Suidae</taxon>
        <taxon>Sus</taxon>
    </lineage>
</organism>
<gene>
    <name evidence="2" type="primary">GOT1</name>
</gene>
<accession>P00503</accession>
<evidence type="ECO:0000250" key="1">
    <source>
        <dbReference type="UniProtKB" id="P13221"/>
    </source>
</evidence>
<evidence type="ECO:0000250" key="2">
    <source>
        <dbReference type="UniProtKB" id="P17174"/>
    </source>
</evidence>
<evidence type="ECO:0000269" key="3">
    <source>
    </source>
</evidence>
<evidence type="ECO:0000269" key="4">
    <source>
    </source>
</evidence>
<evidence type="ECO:0000269" key="5">
    <source>
    </source>
</evidence>
<evidence type="ECO:0000269" key="6">
    <source>
    </source>
</evidence>
<evidence type="ECO:0000269" key="7">
    <source>
    </source>
</evidence>
<evidence type="ECO:0000269" key="8">
    <source ref="3"/>
</evidence>
<evidence type="ECO:0000305" key="9"/>
<evidence type="ECO:0007829" key="10">
    <source>
        <dbReference type="PDB" id="1AJS"/>
    </source>
</evidence>
<evidence type="ECO:0007829" key="11">
    <source>
        <dbReference type="PDB" id="5TOQ"/>
    </source>
</evidence>
<comment type="function">
    <text evidence="1 5">Biosynthesis of L-glutamate from L-aspartate or L-cysteine (PubMed:4634443). Important regulator of levels of glutamate, the major excitatory neurotransmitter of the vertebrate central nervous system. Acts as a scavenger of glutamate in brain neuroprotection. The aspartate aminotransferase activity is involved in hepatic glucose synthesis during development and in adipocyte glyceroneogenesis. Using L-cysteine as substrate, regulates levels of mercaptopyruvate, an important source of hydrogen sulfide. Mercaptopyruvate is converted into H(2)S via the action of 3-mercaptopyruvate sulfurtransferase (3MST). Hydrogen sulfide is an important synaptic modulator and neuroprotectant in the brain (By similarity).</text>
</comment>
<comment type="catalytic activity">
    <reaction evidence="5">
        <text>L-aspartate + 2-oxoglutarate = oxaloacetate + L-glutamate</text>
        <dbReference type="Rhea" id="RHEA:21824"/>
        <dbReference type="ChEBI" id="CHEBI:16452"/>
        <dbReference type="ChEBI" id="CHEBI:16810"/>
        <dbReference type="ChEBI" id="CHEBI:29985"/>
        <dbReference type="ChEBI" id="CHEBI:29991"/>
        <dbReference type="EC" id="2.6.1.1"/>
    </reaction>
    <physiologicalReaction direction="left-to-right" evidence="1">
        <dbReference type="Rhea" id="RHEA:21825"/>
    </physiologicalReaction>
</comment>
<comment type="catalytic activity">
    <reaction evidence="5">
        <text>L-cysteine + 2-oxoglutarate = 2-oxo-3-sulfanylpropanoate + L-glutamate</text>
        <dbReference type="Rhea" id="RHEA:17441"/>
        <dbReference type="ChEBI" id="CHEBI:16810"/>
        <dbReference type="ChEBI" id="CHEBI:29985"/>
        <dbReference type="ChEBI" id="CHEBI:35235"/>
        <dbReference type="ChEBI" id="CHEBI:57678"/>
        <dbReference type="EC" id="2.6.1.3"/>
    </reaction>
    <physiologicalReaction direction="left-to-right" evidence="1">
        <dbReference type="Rhea" id="RHEA:17442"/>
    </physiologicalReaction>
</comment>
<comment type="catalytic activity">
    <reaction evidence="2">
        <text>(2S)-2-aminobutanoate + 2-oxoglutarate = 2-oxobutanoate + L-glutamate</text>
        <dbReference type="Rhea" id="RHEA:70223"/>
        <dbReference type="ChEBI" id="CHEBI:16763"/>
        <dbReference type="ChEBI" id="CHEBI:16810"/>
        <dbReference type="ChEBI" id="CHEBI:29985"/>
        <dbReference type="ChEBI" id="CHEBI:74359"/>
    </reaction>
    <physiologicalReaction direction="right-to-left" evidence="2">
        <dbReference type="Rhea" id="RHEA:70225"/>
    </physiologicalReaction>
</comment>
<comment type="catalytic activity">
    <reaction evidence="1">
        <text>3-sulfino-L-alanine + 2-oxoglutarate = 3-sulfinopyruvate + L-glutamate</text>
        <dbReference type="Rhea" id="RHEA:70295"/>
        <dbReference type="ChEBI" id="CHEBI:16810"/>
        <dbReference type="ChEBI" id="CHEBI:29985"/>
        <dbReference type="ChEBI" id="CHEBI:61085"/>
        <dbReference type="ChEBI" id="CHEBI:140699"/>
    </reaction>
    <physiologicalReaction direction="right-to-left" evidence="1">
        <dbReference type="Rhea" id="RHEA:70297"/>
    </physiologicalReaction>
</comment>
<comment type="cofactor">
    <cofactor evidence="6 7">
        <name>pyridoxal 5'-phosphate</name>
        <dbReference type="ChEBI" id="CHEBI:597326"/>
    </cofactor>
</comment>
<comment type="subunit">
    <text evidence="7">Homodimer.</text>
</comment>
<comment type="subcellular location">
    <subcellularLocation>
        <location>Cytoplasm</location>
    </subcellularLocation>
</comment>
<comment type="miscellaneous">
    <text>In eukaryotes there are cytoplasmic, mitochondrial and chloroplastic isozymes.</text>
</comment>
<comment type="similarity">
    <text evidence="9">Belongs to the class-I pyridoxal-phosphate-dependent aminotransferase family.</text>
</comment>
<protein>
    <recommendedName>
        <fullName evidence="2">Aspartate aminotransferase, cytoplasmic</fullName>
        <shortName>cAspAT</shortName>
        <ecNumber evidence="5">2.6.1.1</ecNumber>
        <ecNumber evidence="5">2.6.1.3</ecNumber>
    </recommendedName>
    <alternativeName>
        <fullName>Cysteine aminotransferase, cytoplasmic</fullName>
    </alternativeName>
    <alternativeName>
        <fullName>Cysteine transaminase, cytoplasmic</fullName>
        <shortName>cCAT</shortName>
    </alternativeName>
    <alternativeName>
        <fullName>Glutamate oxaloacetate transaminase 1</fullName>
    </alternativeName>
    <alternativeName>
        <fullName>Transaminase A</fullName>
    </alternativeName>
</protein>
<feature type="initiator methionine" description="Removed" evidence="3 4 8">
    <location>
        <position position="1"/>
    </location>
</feature>
<feature type="chain" id="PRO_0000123881" description="Aspartate aminotransferase, cytoplasmic">
    <location>
        <begin position="2"/>
        <end position="413"/>
    </location>
</feature>
<feature type="binding site">
    <location>
        <position position="39"/>
    </location>
    <ligand>
        <name>L-aspartate</name>
        <dbReference type="ChEBI" id="CHEBI:29991"/>
    </ligand>
</feature>
<feature type="binding site">
    <location>
        <position position="141"/>
    </location>
    <ligand>
        <name>L-aspartate</name>
        <dbReference type="ChEBI" id="CHEBI:29991"/>
    </ligand>
</feature>
<feature type="binding site">
    <location>
        <position position="195"/>
    </location>
    <ligand>
        <name>L-aspartate</name>
        <dbReference type="ChEBI" id="CHEBI:29991"/>
    </ligand>
</feature>
<feature type="binding site">
    <location>
        <position position="387"/>
    </location>
    <ligand>
        <name>L-aspartate</name>
        <dbReference type="ChEBI" id="CHEBI:29991"/>
    </ligand>
</feature>
<feature type="modified residue" description="N6-(pyridoxal phosphate)lysine">
    <location>
        <position position="259"/>
    </location>
</feature>
<feature type="sequence conflict" description="In Ref. 2; AA sequence." evidence="9" ref="2">
    <original>N</original>
    <variation>D</variation>
    <location>
        <position position="145"/>
    </location>
</feature>
<feature type="turn" evidence="11">
    <location>
        <begin position="6"/>
        <end position="9"/>
    </location>
</feature>
<feature type="helix" evidence="11">
    <location>
        <begin position="17"/>
        <end position="27"/>
    </location>
</feature>
<feature type="helix" evidence="11">
    <location>
        <begin position="52"/>
        <end position="62"/>
    </location>
</feature>
<feature type="helix" evidence="11">
    <location>
        <begin position="78"/>
        <end position="89"/>
    </location>
</feature>
<feature type="helix" evidence="11">
    <location>
        <begin position="94"/>
        <end position="97"/>
    </location>
</feature>
<feature type="strand" evidence="11">
    <location>
        <begin position="101"/>
        <end position="107"/>
    </location>
</feature>
<feature type="helix" evidence="11">
    <location>
        <begin position="108"/>
        <end position="123"/>
    </location>
</feature>
<feature type="strand" evidence="11">
    <location>
        <begin position="124"/>
        <end position="128"/>
    </location>
</feature>
<feature type="strand" evidence="11">
    <location>
        <begin position="134"/>
        <end position="139"/>
    </location>
</feature>
<feature type="helix" evidence="11">
    <location>
        <begin position="144"/>
        <end position="150"/>
    </location>
</feature>
<feature type="strand" evidence="11">
    <location>
        <begin position="156"/>
        <end position="160"/>
    </location>
</feature>
<feature type="turn" evidence="11">
    <location>
        <begin position="164"/>
        <end position="167"/>
    </location>
</feature>
<feature type="helix" evidence="11">
    <location>
        <begin position="171"/>
        <end position="179"/>
    </location>
</feature>
<feature type="strand" evidence="11">
    <location>
        <begin position="186"/>
        <end position="190"/>
    </location>
</feature>
<feature type="turn" evidence="11">
    <location>
        <begin position="195"/>
        <end position="197"/>
    </location>
</feature>
<feature type="helix" evidence="11">
    <location>
        <begin position="203"/>
        <end position="216"/>
    </location>
</feature>
<feature type="strand" evidence="11">
    <location>
        <begin position="219"/>
        <end position="225"/>
    </location>
</feature>
<feature type="turn" evidence="11">
    <location>
        <begin position="227"/>
        <end position="231"/>
    </location>
</feature>
<feature type="helix" evidence="11">
    <location>
        <begin position="234"/>
        <end position="237"/>
    </location>
</feature>
<feature type="helix" evidence="11">
    <location>
        <begin position="239"/>
        <end position="246"/>
    </location>
</feature>
<feature type="strand" evidence="11">
    <location>
        <begin position="251"/>
        <end position="256"/>
    </location>
</feature>
<feature type="turn" evidence="10">
    <location>
        <begin position="258"/>
        <end position="260"/>
    </location>
</feature>
<feature type="helix" evidence="11">
    <location>
        <begin position="264"/>
        <end position="266"/>
    </location>
</feature>
<feature type="strand" evidence="11">
    <location>
        <begin position="268"/>
        <end position="274"/>
    </location>
</feature>
<feature type="helix" evidence="11">
    <location>
        <begin position="278"/>
        <end position="293"/>
    </location>
</feature>
<feature type="turn" evidence="11">
    <location>
        <begin position="294"/>
        <end position="296"/>
    </location>
</feature>
<feature type="helix" evidence="11">
    <location>
        <begin position="302"/>
        <end position="311"/>
    </location>
</feature>
<feature type="helix" evidence="11">
    <location>
        <begin position="314"/>
        <end position="344"/>
    </location>
</feature>
<feature type="helix" evidence="11">
    <location>
        <begin position="353"/>
        <end position="356"/>
    </location>
</feature>
<feature type="strand" evidence="11">
    <location>
        <begin position="359"/>
        <end position="363"/>
    </location>
</feature>
<feature type="helix" evidence="11">
    <location>
        <begin position="368"/>
        <end position="378"/>
    </location>
</feature>
<feature type="strand" evidence="11">
    <location>
        <begin position="387"/>
        <end position="389"/>
    </location>
</feature>
<feature type="helix" evidence="11">
    <location>
        <begin position="390"/>
        <end position="392"/>
    </location>
</feature>
<feature type="turn" evidence="11">
    <location>
        <begin position="395"/>
        <end position="397"/>
    </location>
</feature>
<feature type="helix" evidence="11">
    <location>
        <begin position="398"/>
        <end position="411"/>
    </location>
</feature>
<sequence length="413" mass="46475">MAPPSVFAEVPQAQPVLVFKLIADFREDPDPRKVNLGVGAYRTDDCQPWVLPVVRKVEQRIANDSSLNHEYLPILGLAEFRTCASRLALGDDSPALQEKRVGGVQSLGGTGALRIGAEFLARWYNGTNNKDTPVYVSSPTWENHNGVFTTAGFKDIRSYRYWDTEKRGLDLQGFLSDLENAPEFSIFVLHACAHNPTGTDPTPEQWKQIASVMKRRFLFPFFDSAYQGFASGNLEKDAWAIRYFVSEGFELFCAQSFSKNFGLYNERVGNLTVVAKEPDSILRVLSQMEKIVRVTWSNPPAQGARIVARTLSDPELFHEWTGNVKTMADRILSMRSELRARLEALKTPGTWNHITDQIGMFSFTGLNPKQVEYLINEKHIYLLPSGRINMCGLTTKNLDYVATSIHEAVTKIQ</sequence>
<proteinExistence type="evidence at protein level"/>
<dbReference type="EC" id="2.6.1.1" evidence="5"/>
<dbReference type="EC" id="2.6.1.3" evidence="5"/>
<dbReference type="EMBL" id="M24088">
    <property type="protein sequence ID" value="AAA53531.1"/>
    <property type="molecule type" value="mRNA"/>
</dbReference>
<dbReference type="PIR" id="A30138">
    <property type="entry name" value="XNPGDC"/>
</dbReference>
<dbReference type="RefSeq" id="NP_999092.1">
    <property type="nucleotide sequence ID" value="NM_213927.1"/>
</dbReference>
<dbReference type="PDB" id="1AJR">
    <property type="method" value="X-ray"/>
    <property type="resolution" value="1.74 A"/>
    <property type="chains" value="A/B=2-413"/>
</dbReference>
<dbReference type="PDB" id="1AJS">
    <property type="method" value="X-ray"/>
    <property type="resolution" value="1.60 A"/>
    <property type="chains" value="A/B=2-413"/>
</dbReference>
<dbReference type="PDB" id="5TON">
    <property type="method" value="X-ray"/>
    <property type="resolution" value="1.40 A"/>
    <property type="chains" value="A/B=1-413"/>
</dbReference>
<dbReference type="PDB" id="5TOQ">
    <property type="method" value="X-ray"/>
    <property type="resolution" value="1.20 A"/>
    <property type="chains" value="A/B=1-413"/>
</dbReference>
<dbReference type="PDB" id="5TOR">
    <property type="method" value="X-ray"/>
    <property type="resolution" value="1.35 A"/>
    <property type="chains" value="A/B=1-413"/>
</dbReference>
<dbReference type="PDB" id="5TOT">
    <property type="method" value="X-ray"/>
    <property type="resolution" value="1.40 A"/>
    <property type="chains" value="A/B=1-413"/>
</dbReference>
<dbReference type="PDB" id="5VJZ">
    <property type="method" value="Other"/>
    <property type="resolution" value="2.00 A"/>
    <property type="chains" value="A/B=2-413"/>
</dbReference>
<dbReference type="PDB" id="5VK7">
    <property type="method" value="X-ray"/>
    <property type="resolution" value="1.90 A"/>
    <property type="chains" value="A/B=1-413"/>
</dbReference>
<dbReference type="PDB" id="7TUR">
    <property type="method" value="Other"/>
    <property type="resolution" value="1.70 A"/>
    <property type="chains" value="A/B=1-413"/>
</dbReference>
<dbReference type="PDBsum" id="1AJR"/>
<dbReference type="PDBsum" id="1AJS"/>
<dbReference type="PDBsum" id="5TON"/>
<dbReference type="PDBsum" id="5TOQ"/>
<dbReference type="PDBsum" id="5TOR"/>
<dbReference type="PDBsum" id="5TOT"/>
<dbReference type="PDBsum" id="5VJZ"/>
<dbReference type="PDBsum" id="5VK7"/>
<dbReference type="PDBsum" id="7TUR"/>
<dbReference type="SMR" id="P00503"/>
<dbReference type="FunCoup" id="P00503">
    <property type="interactions" value="1340"/>
</dbReference>
<dbReference type="STRING" id="9823.ENSSSCP00000011226"/>
<dbReference type="GlyGen" id="P00503">
    <property type="glycosylation" value="1 site"/>
</dbReference>
<dbReference type="PaxDb" id="9823-ENSSSCP00000011226"/>
<dbReference type="PeptideAtlas" id="P00503"/>
<dbReference type="Ensembl" id="ENSSSCT00000011527.4">
    <property type="protein sequence ID" value="ENSSSCP00000011226.2"/>
    <property type="gene ID" value="ENSSSCG00000010537.4"/>
</dbReference>
<dbReference type="Ensembl" id="ENSSSCT00015097909.1">
    <property type="protein sequence ID" value="ENSSSCP00015040239.1"/>
    <property type="gene ID" value="ENSSSCG00015072790.1"/>
</dbReference>
<dbReference type="Ensembl" id="ENSSSCT00025106177.1">
    <property type="protein sequence ID" value="ENSSSCP00025047612.1"/>
    <property type="gene ID" value="ENSSSCG00025076609.1"/>
</dbReference>
<dbReference type="Ensembl" id="ENSSSCT00035082758.1">
    <property type="protein sequence ID" value="ENSSSCP00035034354.1"/>
    <property type="gene ID" value="ENSSSCG00035061591.1"/>
</dbReference>
<dbReference type="Ensembl" id="ENSSSCT00040089752.1">
    <property type="protein sequence ID" value="ENSSSCP00040039448.1"/>
    <property type="gene ID" value="ENSSSCG00040065637.1"/>
</dbReference>
<dbReference type="Ensembl" id="ENSSSCT00045036363.1">
    <property type="protein sequence ID" value="ENSSSCP00045025297.1"/>
    <property type="gene ID" value="ENSSSCG00045021280.1"/>
</dbReference>
<dbReference type="Ensembl" id="ENSSSCT00050071860.1">
    <property type="protein sequence ID" value="ENSSSCP00050030901.1"/>
    <property type="gene ID" value="ENSSSCG00050052766.1"/>
</dbReference>
<dbReference type="Ensembl" id="ENSSSCT00055003685.1">
    <property type="protein sequence ID" value="ENSSSCP00055002814.1"/>
    <property type="gene ID" value="ENSSSCG00055001970.1"/>
</dbReference>
<dbReference type="Ensembl" id="ENSSSCT00060059202.1">
    <property type="protein sequence ID" value="ENSSSCP00060025356.1"/>
    <property type="gene ID" value="ENSSSCG00060043652.1"/>
</dbReference>
<dbReference type="Ensembl" id="ENSSSCT00065098926.1">
    <property type="protein sequence ID" value="ENSSSCP00065043393.1"/>
    <property type="gene ID" value="ENSSSCG00065071886.1"/>
</dbReference>
<dbReference type="Ensembl" id="ENSSSCT00070028254.1">
    <property type="protein sequence ID" value="ENSSSCP00070023534.1"/>
    <property type="gene ID" value="ENSSSCG00070014407.1"/>
</dbReference>
<dbReference type="Ensembl" id="ENSSSCT00085022983">
    <property type="protein sequence ID" value="ENSSSCP00085015802"/>
    <property type="gene ID" value="ENSSSCG00085012248"/>
</dbReference>
<dbReference type="Ensembl" id="ENSSSCT00110044493">
    <property type="protein sequence ID" value="ENSSSCP00110031389"/>
    <property type="gene ID" value="ENSSSCG00110022950"/>
</dbReference>
<dbReference type="Ensembl" id="ENSSSCT00115036100">
    <property type="protein sequence ID" value="ENSSSCP00115034181"/>
    <property type="gene ID" value="ENSSSCG00115020395"/>
</dbReference>
<dbReference type="GeneID" id="396967"/>
<dbReference type="KEGG" id="ssc:396967"/>
<dbReference type="CTD" id="2805"/>
<dbReference type="VGNC" id="VGNC:88561">
    <property type="gene designation" value="GOT1"/>
</dbReference>
<dbReference type="eggNOG" id="KOG1412">
    <property type="taxonomic scope" value="Eukaryota"/>
</dbReference>
<dbReference type="GeneTree" id="ENSGT00950000183082"/>
<dbReference type="HOGENOM" id="CLU_032440_1_2_1"/>
<dbReference type="InParanoid" id="P00503"/>
<dbReference type="OMA" id="GTWTHIT"/>
<dbReference type="OrthoDB" id="6752799at2759"/>
<dbReference type="TreeFam" id="TF314089"/>
<dbReference type="BioCyc" id="MetaCyc:MONOMER-13031"/>
<dbReference type="BRENDA" id="2.6.1.1">
    <property type="organism ID" value="6170"/>
</dbReference>
<dbReference type="Reactome" id="R-SSC-8963693">
    <property type="pathway name" value="Aspartate and asparagine metabolism"/>
</dbReference>
<dbReference type="Reactome" id="R-SSC-9856872">
    <property type="pathway name" value="Malate-aspartate shuttle"/>
</dbReference>
<dbReference type="SABIO-RK" id="P00503"/>
<dbReference type="EvolutionaryTrace" id="P00503"/>
<dbReference type="Proteomes" id="UP000008227">
    <property type="component" value="Chromosome 14"/>
</dbReference>
<dbReference type="Proteomes" id="UP000314985">
    <property type="component" value="Chromosome 14"/>
</dbReference>
<dbReference type="Proteomes" id="UP000694570">
    <property type="component" value="Unplaced"/>
</dbReference>
<dbReference type="Proteomes" id="UP000694571">
    <property type="component" value="Unplaced"/>
</dbReference>
<dbReference type="Proteomes" id="UP000694720">
    <property type="component" value="Unplaced"/>
</dbReference>
<dbReference type="Proteomes" id="UP000694722">
    <property type="component" value="Unplaced"/>
</dbReference>
<dbReference type="Proteomes" id="UP000694723">
    <property type="component" value="Unplaced"/>
</dbReference>
<dbReference type="Proteomes" id="UP000694724">
    <property type="component" value="Unplaced"/>
</dbReference>
<dbReference type="Proteomes" id="UP000694725">
    <property type="component" value="Unplaced"/>
</dbReference>
<dbReference type="Proteomes" id="UP000694726">
    <property type="component" value="Unplaced"/>
</dbReference>
<dbReference type="Proteomes" id="UP000694727">
    <property type="component" value="Unplaced"/>
</dbReference>
<dbReference type="Proteomes" id="UP000694728">
    <property type="component" value="Unplaced"/>
</dbReference>
<dbReference type="Bgee" id="ENSSSCG00000010537">
    <property type="expression patterns" value="Expressed in psoas major muscle and 44 other cell types or tissues"/>
</dbReference>
<dbReference type="ExpressionAtlas" id="P00503">
    <property type="expression patterns" value="baseline and differential"/>
</dbReference>
<dbReference type="GO" id="GO:0005829">
    <property type="term" value="C:cytosol"/>
    <property type="evidence" value="ECO:0000318"/>
    <property type="project" value="GO_Central"/>
</dbReference>
<dbReference type="GO" id="GO:0004069">
    <property type="term" value="F:L-aspartate:2-oxoglutarate aminotransferase activity"/>
    <property type="evidence" value="ECO:0000250"/>
    <property type="project" value="UniProtKB"/>
</dbReference>
<dbReference type="GO" id="GO:0047801">
    <property type="term" value="F:L-cysteine transaminase activity"/>
    <property type="evidence" value="ECO:0000250"/>
    <property type="project" value="UniProtKB"/>
</dbReference>
<dbReference type="GO" id="GO:0004609">
    <property type="term" value="F:phosphatidylserine decarboxylase activity"/>
    <property type="evidence" value="ECO:0007669"/>
    <property type="project" value="Ensembl"/>
</dbReference>
<dbReference type="GO" id="GO:0030170">
    <property type="term" value="F:pyridoxal phosphate binding"/>
    <property type="evidence" value="ECO:0007669"/>
    <property type="project" value="InterPro"/>
</dbReference>
<dbReference type="GO" id="GO:0006103">
    <property type="term" value="P:2-oxoglutarate metabolic process"/>
    <property type="evidence" value="ECO:0000250"/>
    <property type="project" value="UniProtKB"/>
</dbReference>
<dbReference type="GO" id="GO:0006532">
    <property type="term" value="P:aspartate biosynthetic process"/>
    <property type="evidence" value="ECO:0000318"/>
    <property type="project" value="GO_Central"/>
</dbReference>
<dbReference type="GO" id="GO:0006533">
    <property type="term" value="P:aspartate catabolic process"/>
    <property type="evidence" value="ECO:0007669"/>
    <property type="project" value="Ensembl"/>
</dbReference>
<dbReference type="GO" id="GO:0006531">
    <property type="term" value="P:aspartate metabolic process"/>
    <property type="evidence" value="ECO:0000250"/>
    <property type="project" value="UniProtKB"/>
</dbReference>
<dbReference type="GO" id="GO:0032869">
    <property type="term" value="P:cellular response to insulin stimulus"/>
    <property type="evidence" value="ECO:0007669"/>
    <property type="project" value="Ensembl"/>
</dbReference>
<dbReference type="GO" id="GO:0055089">
    <property type="term" value="P:fatty acid homeostasis"/>
    <property type="evidence" value="ECO:0007669"/>
    <property type="project" value="Ensembl"/>
</dbReference>
<dbReference type="GO" id="GO:0006094">
    <property type="term" value="P:gluconeogenesis"/>
    <property type="evidence" value="ECO:0007669"/>
    <property type="project" value="Ensembl"/>
</dbReference>
<dbReference type="GO" id="GO:0019550">
    <property type="term" value="P:glutamate catabolic process to aspartate"/>
    <property type="evidence" value="ECO:0007669"/>
    <property type="project" value="Ensembl"/>
</dbReference>
<dbReference type="GO" id="GO:0006536">
    <property type="term" value="P:glutamate metabolic process"/>
    <property type="evidence" value="ECO:0000250"/>
    <property type="project" value="UniProtKB"/>
</dbReference>
<dbReference type="GO" id="GO:0006114">
    <property type="term" value="P:glycerol biosynthetic process"/>
    <property type="evidence" value="ECO:0000250"/>
    <property type="project" value="UniProtKB"/>
</dbReference>
<dbReference type="GO" id="GO:0043490">
    <property type="term" value="P:malate-aspartate shuttle"/>
    <property type="evidence" value="ECO:0007669"/>
    <property type="project" value="Ensembl"/>
</dbReference>
<dbReference type="GO" id="GO:0007219">
    <property type="term" value="P:Notch signaling pathway"/>
    <property type="evidence" value="ECO:0007669"/>
    <property type="project" value="Ensembl"/>
</dbReference>
<dbReference type="GO" id="GO:0006107">
    <property type="term" value="P:oxaloacetate metabolic process"/>
    <property type="evidence" value="ECO:0007669"/>
    <property type="project" value="Ensembl"/>
</dbReference>
<dbReference type="GO" id="GO:0051384">
    <property type="term" value="P:response to glucocorticoid"/>
    <property type="evidence" value="ECO:0007669"/>
    <property type="project" value="Ensembl"/>
</dbReference>
<dbReference type="CDD" id="cd00609">
    <property type="entry name" value="AAT_like"/>
    <property type="match status" value="1"/>
</dbReference>
<dbReference type="FunFam" id="3.40.640.10:FF:000044">
    <property type="entry name" value="Aspartate aminotransferase"/>
    <property type="match status" value="1"/>
</dbReference>
<dbReference type="FunFam" id="3.90.1150.10:FF:000001">
    <property type="entry name" value="Aspartate aminotransferase"/>
    <property type="match status" value="1"/>
</dbReference>
<dbReference type="Gene3D" id="3.90.1150.10">
    <property type="entry name" value="Aspartate Aminotransferase, domain 1"/>
    <property type="match status" value="1"/>
</dbReference>
<dbReference type="Gene3D" id="3.40.640.10">
    <property type="entry name" value="Type I PLP-dependent aspartate aminotransferase-like (Major domain)"/>
    <property type="match status" value="1"/>
</dbReference>
<dbReference type="InterPro" id="IPR004839">
    <property type="entry name" value="Aminotransferase_I/II_large"/>
</dbReference>
<dbReference type="InterPro" id="IPR000796">
    <property type="entry name" value="Asp_trans"/>
</dbReference>
<dbReference type="InterPro" id="IPR004838">
    <property type="entry name" value="NHTrfase_class1_PyrdxlP-BS"/>
</dbReference>
<dbReference type="InterPro" id="IPR015424">
    <property type="entry name" value="PyrdxlP-dep_Trfase"/>
</dbReference>
<dbReference type="InterPro" id="IPR015421">
    <property type="entry name" value="PyrdxlP-dep_Trfase_major"/>
</dbReference>
<dbReference type="InterPro" id="IPR015422">
    <property type="entry name" value="PyrdxlP-dep_Trfase_small"/>
</dbReference>
<dbReference type="NCBIfam" id="NF006719">
    <property type="entry name" value="PRK09257.1"/>
    <property type="match status" value="1"/>
</dbReference>
<dbReference type="PANTHER" id="PTHR11879">
    <property type="entry name" value="ASPARTATE AMINOTRANSFERASE"/>
    <property type="match status" value="1"/>
</dbReference>
<dbReference type="PANTHER" id="PTHR11879:SF3">
    <property type="entry name" value="ASPARTATE AMINOTRANSFERASE, CYTOPLASMIC"/>
    <property type="match status" value="1"/>
</dbReference>
<dbReference type="Pfam" id="PF00155">
    <property type="entry name" value="Aminotran_1_2"/>
    <property type="match status" value="1"/>
</dbReference>
<dbReference type="PRINTS" id="PR00799">
    <property type="entry name" value="TRANSAMINASE"/>
</dbReference>
<dbReference type="SUPFAM" id="SSF53383">
    <property type="entry name" value="PLP-dependent transferases"/>
    <property type="match status" value="1"/>
</dbReference>
<dbReference type="PROSITE" id="PS00105">
    <property type="entry name" value="AA_TRANSFER_CLASS_1"/>
    <property type="match status" value="1"/>
</dbReference>